<comment type="function">
    <text evidence="1">The heterodimer glycoprotein H-glycoprotein L is required for the fusion of viral and plasma membranes leading to virus entry into the host cell. Acts as a functional inhibitor of gH and maintains gH in an inhibited form. Upon binding to host integrins, gL dissociates from gH leading to activation of the viral fusion glycoproteins gB and gH.</text>
</comment>
<comment type="subunit">
    <text evidence="1 4 5">Interacts with glycoprotein H (gH); this interaction is necessary for the correct processing and cell surface expression of gH. The heterodimer gH/gL seems to interact with gB trimers during fusion.</text>
</comment>
<comment type="subcellular location">
    <subcellularLocation>
        <location evidence="1">Virion membrane</location>
        <topology evidence="1">Peripheral membrane protein</topology>
        <orientation evidence="1">Extracellular side</orientation>
    </subcellularLocation>
    <subcellularLocation>
        <location evidence="1">Host cell membrane</location>
        <topology evidence="1">Peripheral membrane protein</topology>
        <orientation evidence="1">Extracellular side</orientation>
    </subcellularLocation>
    <subcellularLocation>
        <location evidence="1">Host Golgi apparatus</location>
        <location evidence="1">Host trans-Golgi network</location>
    </subcellularLocation>
    <text evidence="1">gL associates with the extravirion surface through its binding to gH. During virion morphogenesis, this protein probably accumulates in the host trans-Golgi where secondary envelopment occurs.</text>
</comment>
<comment type="PTM">
    <text evidence="6">N-glycosylated, O-glycosylated, and sialylated.</text>
</comment>
<comment type="similarity">
    <text evidence="2">Belongs to the herpesviridae glycoprotein L (gL) family. Alphaherpesvirinae gL subfamily.</text>
</comment>
<feature type="signal peptide" evidence="1">
    <location>
        <begin position="1"/>
        <end position="22"/>
    </location>
</feature>
<feature type="chain" id="PRO_0000385474" description="Envelope glycoprotein L" evidence="1">
    <location>
        <begin position="23"/>
        <end position="224"/>
    </location>
</feature>
<feature type="domain" description="gL alphaherpesvirus-type" evidence="2">
    <location>
        <begin position="23"/>
        <end position="201"/>
    </location>
</feature>
<feature type="region of interest" description="Interaction with gH" evidence="1">
    <location>
        <begin position="20"/>
        <end position="161"/>
    </location>
</feature>
<feature type="region of interest" description="Interaction with gL">
    <location>
        <begin position="20"/>
        <end position="161"/>
    </location>
</feature>
<feature type="region of interest" description="Disordered" evidence="3">
    <location>
        <begin position="161"/>
        <end position="224"/>
    </location>
</feature>
<feature type="compositionally biased region" description="Basic residues" evidence="3">
    <location>
        <begin position="213"/>
        <end position="224"/>
    </location>
</feature>
<feature type="glycosylation site" description="N-linked (GlcNAc...) asparagine; by host" evidence="5">
    <location>
        <position position="170"/>
    </location>
</feature>
<feature type="disulfide bond" evidence="2">
    <location>
        <begin position="44"/>
        <end position="76"/>
    </location>
</feature>
<feature type="disulfide bond" evidence="2">
    <location>
        <begin position="149"/>
        <end position="160"/>
    </location>
</feature>
<organism>
    <name type="scientific">Human herpesvirus 1 (strain KOS)</name>
    <name type="common">HHV-1</name>
    <name type="synonym">Human herpes simplex virus 1</name>
    <dbReference type="NCBI Taxonomy" id="10306"/>
    <lineage>
        <taxon>Viruses</taxon>
        <taxon>Duplodnaviria</taxon>
        <taxon>Heunggongvirae</taxon>
        <taxon>Peploviricota</taxon>
        <taxon>Herviviricetes</taxon>
        <taxon>Herpesvirales</taxon>
        <taxon>Orthoherpesviridae</taxon>
        <taxon>Alphaherpesvirinae</taxon>
        <taxon>Simplexvirus</taxon>
        <taxon>Simplexvirus humanalpha1</taxon>
        <taxon>Human herpesvirus 1</taxon>
    </lineage>
</organism>
<sequence length="224" mass="24897">MGILGWVGLIAVGVLCVRGGLSSTEYVIRSRVAREVGDILKVPCVPLPSDDLDWRYETPSAINYALIDGIFLRYHCPGLDTVLWDRHAQKAYWVNPFLFVAGFLEDLSHPAFPANTQETETRLALYKEIRQALDSRKQAASHTPVKAGCVNFDYSRTRRCVGRQDLGPTNGTSGRTPVLPPDDEAGLQPKPLTTPPPIIATSDPTPRRDAATKSRRRRPHSRRL</sequence>
<proteinExistence type="evidence at protein level"/>
<dbReference type="EMBL" id="U53683">
    <property type="protein sequence ID" value="AAA99790.1"/>
    <property type="molecule type" value="Genomic_DNA"/>
</dbReference>
<dbReference type="SMR" id="Q96912"/>
<dbReference type="GlyCosmos" id="Q96912">
    <property type="glycosylation" value="1 site, No reported glycans"/>
</dbReference>
<dbReference type="iPTMnet" id="Q96912"/>
<dbReference type="GO" id="GO:0044177">
    <property type="term" value="C:host cell Golgi apparatus"/>
    <property type="evidence" value="ECO:0007669"/>
    <property type="project" value="UniProtKB-SubCell"/>
</dbReference>
<dbReference type="GO" id="GO:0020002">
    <property type="term" value="C:host cell plasma membrane"/>
    <property type="evidence" value="ECO:0007669"/>
    <property type="project" value="UniProtKB-SubCell"/>
</dbReference>
<dbReference type="GO" id="GO:0016020">
    <property type="term" value="C:membrane"/>
    <property type="evidence" value="ECO:0007669"/>
    <property type="project" value="UniProtKB-KW"/>
</dbReference>
<dbReference type="GO" id="GO:0019031">
    <property type="term" value="C:viral envelope"/>
    <property type="evidence" value="ECO:0007669"/>
    <property type="project" value="UniProtKB-KW"/>
</dbReference>
<dbReference type="GO" id="GO:0055036">
    <property type="term" value="C:virion membrane"/>
    <property type="evidence" value="ECO:0007669"/>
    <property type="project" value="UniProtKB-SubCell"/>
</dbReference>
<dbReference type="GO" id="GO:0019064">
    <property type="term" value="P:fusion of virus membrane with host plasma membrane"/>
    <property type="evidence" value="ECO:0007669"/>
    <property type="project" value="UniProtKB-KW"/>
</dbReference>
<dbReference type="GO" id="GO:0046718">
    <property type="term" value="P:symbiont entry into host cell"/>
    <property type="evidence" value="ECO:0007669"/>
    <property type="project" value="UniProtKB-KW"/>
</dbReference>
<dbReference type="Gene3D" id="3.30.390.170">
    <property type="match status" value="1"/>
</dbReference>
<dbReference type="HAMAP" id="MF_04034">
    <property type="entry name" value="HSV_GL_alphagamma"/>
    <property type="match status" value="1"/>
</dbReference>
<dbReference type="InterPro" id="IPR022200">
    <property type="entry name" value="Herpes_gL_C"/>
</dbReference>
<dbReference type="InterPro" id="IPR007923">
    <property type="entry name" value="Herpes_gL_N"/>
</dbReference>
<dbReference type="InterPro" id="IPR038311">
    <property type="entry name" value="Herpes_gL_N_sf"/>
</dbReference>
<dbReference type="InterPro" id="IPR034708">
    <property type="entry name" value="HSV_GL_alphagamma"/>
</dbReference>
<dbReference type="Pfam" id="PF12524">
    <property type="entry name" value="GlyL_C"/>
    <property type="match status" value="1"/>
</dbReference>
<dbReference type="Pfam" id="PF05259">
    <property type="entry name" value="Herpes_UL1"/>
    <property type="match status" value="1"/>
</dbReference>
<dbReference type="PROSITE" id="PS52024">
    <property type="entry name" value="GL_AHV"/>
    <property type="match status" value="1"/>
</dbReference>
<evidence type="ECO:0000255" key="1">
    <source>
        <dbReference type="HAMAP-Rule" id="MF_04034"/>
    </source>
</evidence>
<evidence type="ECO:0000255" key="2">
    <source>
        <dbReference type="PROSITE-ProRule" id="PRU01368"/>
    </source>
</evidence>
<evidence type="ECO:0000256" key="3">
    <source>
        <dbReference type="SAM" id="MobiDB-lite"/>
    </source>
</evidence>
<evidence type="ECO:0000269" key="4">
    <source>
    </source>
</evidence>
<evidence type="ECO:0000269" key="5">
    <source>
    </source>
</evidence>
<evidence type="ECO:0000305" key="6">
    <source>
    </source>
</evidence>
<keyword id="KW-1015">Disulfide bond</keyword>
<keyword id="KW-1169">Fusion of virus membrane with host cell membrane</keyword>
<keyword id="KW-1168">Fusion of virus membrane with host membrane</keyword>
<keyword id="KW-0325">Glycoprotein</keyword>
<keyword id="KW-1032">Host cell membrane</keyword>
<keyword id="KW-1040">Host Golgi apparatus</keyword>
<keyword id="KW-1043">Host membrane</keyword>
<keyword id="KW-0472">Membrane</keyword>
<keyword id="KW-0732">Signal</keyword>
<keyword id="KW-0261">Viral envelope protein</keyword>
<keyword id="KW-1162">Viral penetration into host cytoplasm</keyword>
<keyword id="KW-0946">Virion</keyword>
<keyword id="KW-1160">Virus entry into host cell</keyword>
<organismHost>
    <name type="scientific">Homo sapiens</name>
    <name type="common">Human</name>
    <dbReference type="NCBI Taxonomy" id="9606"/>
</organismHost>
<protein>
    <recommendedName>
        <fullName evidence="1">Envelope glycoprotein L</fullName>
        <shortName evidence="1">gL</shortName>
    </recommendedName>
</protein>
<reference key="1">
    <citation type="journal article" date="1996" name="Virology">
        <title>Variability of herpes simplex virus 1 gL and anti-gL antibodies that inhibit cell fusion but not viral infectivity.</title>
        <authorList>
            <person name="Novotny M.J."/>
            <person name="Parish M.L."/>
            <person name="Spear P.G."/>
        </authorList>
    </citation>
    <scope>NUCLEOTIDE SEQUENCE [GENOMIC DNA]</scope>
    <source>
        <strain>KOS</strain>
        <strain>mutant 804</strain>
    </source>
</reference>
<reference key="2">
    <citation type="journal article" date="1998" name="J. Virol.">
        <title>Structural and antigenic analysis of a truncated form of the herpes simplex virus glycoprotein gH-gL complex.</title>
        <authorList>
            <person name="Peng T."/>
            <person name="Ponce de Leon M."/>
            <person name="Novotny M.J."/>
            <person name="Jiang H."/>
            <person name="Lambris J.D."/>
            <person name="Dubin G."/>
            <person name="Spear P.G."/>
            <person name="Cohen G.H."/>
            <person name="Eisenberg R.J."/>
        </authorList>
    </citation>
    <scope>INTERACTION WITH GH</scope>
    <scope>GLYCOSYLATION</scope>
    <source>
        <strain>KOS</strain>
    </source>
</reference>
<reference key="3">
    <citation type="journal article" date="2007" name="Proc. Natl. Acad. Sci. U.S.A.">
        <title>Bimolecular complementation reveals that glycoproteins gB and gH/gL of herpes simplex virus interact with each other during cell fusion.</title>
        <authorList>
            <person name="Atanasiu D."/>
            <person name="Whitbeck J.C."/>
            <person name="Cairns T.M."/>
            <person name="Reilly B."/>
            <person name="Cohen G.H."/>
            <person name="Eisenberg R.J."/>
        </authorList>
    </citation>
    <scope>INTERACTION OF GH/GL HETERODIMER WITH GB</scope>
</reference>
<accession>Q96912</accession>
<name>GL_HHV1K</name>
<gene>
    <name evidence="1" type="primary">gL</name>
    <name type="ORF">UL1</name>
</gene>